<comment type="function">
    <text evidence="1">Required for coenzyme pyrroloquinoline quinone (PQQ) biosynthesis. PQQ is probably formed by cross-linking a specific glutamate to a specific tyrosine residue and excising these residues from the peptide.</text>
</comment>
<comment type="pathway">
    <text evidence="1">Cofactor biosynthesis; pyrroloquinoline quinone biosynthesis.</text>
</comment>
<comment type="similarity">
    <text evidence="1">Belongs to the PqqA family.</text>
</comment>
<feature type="chain" id="PRO_1000061700" description="Coenzyme PQQ synthesis protein A">
    <location>
        <begin position="1"/>
        <end position="23"/>
    </location>
</feature>
<feature type="cross-link" description="Pyrroloquinoline quinone (Glu-Tyr)" evidence="1">
    <location>
        <begin position="15"/>
        <end position="19"/>
    </location>
</feature>
<evidence type="ECO:0000255" key="1">
    <source>
        <dbReference type="HAMAP-Rule" id="MF_00656"/>
    </source>
</evidence>
<dbReference type="EMBL" id="CT573326">
    <property type="protein sequence ID" value="CAK13357.1"/>
    <property type="molecule type" value="Genomic_DNA"/>
</dbReference>
<dbReference type="RefSeq" id="WP_003243383.1">
    <property type="nucleotide sequence ID" value="NC_008027.1"/>
</dbReference>
<dbReference type="STRING" id="384676.PSEEN0398"/>
<dbReference type="GeneID" id="98111427"/>
<dbReference type="KEGG" id="pen:PSEEN0398"/>
<dbReference type="HOGENOM" id="CLU_219131_1_0_6"/>
<dbReference type="UniPathway" id="UPA00539"/>
<dbReference type="Proteomes" id="UP000000658">
    <property type="component" value="Chromosome"/>
</dbReference>
<dbReference type="GO" id="GO:0018189">
    <property type="term" value="P:pyrroloquinoline quinone biosynthetic process"/>
    <property type="evidence" value="ECO:0007669"/>
    <property type="project" value="UniProtKB-UniRule"/>
</dbReference>
<dbReference type="HAMAP" id="MF_00656">
    <property type="entry name" value="PQQ_syn_PqqA"/>
    <property type="match status" value="1"/>
</dbReference>
<dbReference type="InterPro" id="IPR011725">
    <property type="entry name" value="PQQ_synth_PqqA"/>
</dbReference>
<dbReference type="NCBIfam" id="TIGR02107">
    <property type="entry name" value="PQQ_syn_pqqA"/>
    <property type="match status" value="1"/>
</dbReference>
<dbReference type="Pfam" id="PF08042">
    <property type="entry name" value="PqqA"/>
    <property type="match status" value="1"/>
</dbReference>
<reference key="1">
    <citation type="journal article" date="2006" name="Nat. Biotechnol.">
        <title>Complete genome sequence of the entomopathogenic and metabolically versatile soil bacterium Pseudomonas entomophila.</title>
        <authorList>
            <person name="Vodovar N."/>
            <person name="Vallenet D."/>
            <person name="Cruveiller S."/>
            <person name="Rouy Z."/>
            <person name="Barbe V."/>
            <person name="Acosta C."/>
            <person name="Cattolico L."/>
            <person name="Jubin C."/>
            <person name="Lajus A."/>
            <person name="Segurens B."/>
            <person name="Vacherie B."/>
            <person name="Wincker P."/>
            <person name="Weissenbach J."/>
            <person name="Lemaitre B."/>
            <person name="Medigue C."/>
            <person name="Boccard F."/>
        </authorList>
    </citation>
    <scope>NUCLEOTIDE SEQUENCE [LARGE SCALE GENOMIC DNA]</scope>
    <source>
        <strain>L48</strain>
    </source>
</reference>
<organism>
    <name type="scientific">Pseudomonas entomophila (strain L48)</name>
    <dbReference type="NCBI Taxonomy" id="384676"/>
    <lineage>
        <taxon>Bacteria</taxon>
        <taxon>Pseudomonadati</taxon>
        <taxon>Pseudomonadota</taxon>
        <taxon>Gammaproteobacteria</taxon>
        <taxon>Pseudomonadales</taxon>
        <taxon>Pseudomonadaceae</taxon>
        <taxon>Pseudomonas</taxon>
    </lineage>
</organism>
<sequence>MWTKPAYTDLRIGFEVTMYFANR</sequence>
<name>PQQA_PSEE4</name>
<gene>
    <name evidence="1" type="primary">pqqA</name>
    <name type="ordered locus">PSEEN0398</name>
</gene>
<protein>
    <recommendedName>
        <fullName evidence="1">Coenzyme PQQ synthesis protein A</fullName>
    </recommendedName>
    <alternativeName>
        <fullName evidence="1">Pyrroloquinoline quinone biosynthesis protein A</fullName>
    </alternativeName>
</protein>
<proteinExistence type="inferred from homology"/>
<keyword id="KW-0884">PQQ biosynthesis</keyword>
<accession>Q1IG45</accession>